<sequence length="297" mass="31771">MSSLPYRGRFAPSPTGPLHFGSLLAALGSWLLARHAGGEWHVRIEDIDPPRAEPGASERQLHTLAAFGLHSDGPVLYQSDRDAYYEAALSRLLRSGAAFECSCSRAELAAMGGIHHVCVAPLGIRRAVRLRVPPNTQASFQDALQGRITQDVYSEVGDVVLRRADGYWAYQLAVVVDDAAQGITDVVRGADLLDSTPRQLVLQQALGVAPPRYLHLPLILGADGRKLSKSHAAQPVDDSDPLPALRAAWRALGQAPAALPARASVAGVLQHAVQHFSPQRLPRVASLDAATRIDAPA</sequence>
<organism>
    <name type="scientific">Xanthomonas campestris pv. campestris (strain ATCC 33913 / DSM 3586 / NCPPB 528 / LMG 568 / P 25)</name>
    <dbReference type="NCBI Taxonomy" id="190485"/>
    <lineage>
        <taxon>Bacteria</taxon>
        <taxon>Pseudomonadati</taxon>
        <taxon>Pseudomonadota</taxon>
        <taxon>Gammaproteobacteria</taxon>
        <taxon>Lysobacterales</taxon>
        <taxon>Lysobacteraceae</taxon>
        <taxon>Xanthomonas</taxon>
    </lineage>
</organism>
<protein>
    <recommendedName>
        <fullName evidence="1">Glutamyl-Q tRNA(Asp) synthetase</fullName>
        <shortName evidence="1">Glu-Q-RSs</shortName>
        <ecNumber evidence="1">6.1.1.-</ecNumber>
    </recommendedName>
</protein>
<evidence type="ECO:0000255" key="1">
    <source>
        <dbReference type="HAMAP-Rule" id="MF_01428"/>
    </source>
</evidence>
<evidence type="ECO:0000305" key="2"/>
<name>GLUQ_XANCP</name>
<keyword id="KW-0030">Aminoacyl-tRNA synthetase</keyword>
<keyword id="KW-0067">ATP-binding</keyword>
<keyword id="KW-0436">Ligase</keyword>
<keyword id="KW-0479">Metal-binding</keyword>
<keyword id="KW-0547">Nucleotide-binding</keyword>
<keyword id="KW-1185">Reference proteome</keyword>
<keyword id="KW-0862">Zinc</keyword>
<accession>Q8P8E9</accession>
<gene>
    <name evidence="1" type="primary">gluQ</name>
    <name type="ordered locus">XCC2293</name>
</gene>
<comment type="function">
    <text evidence="1">Catalyzes the tRNA-independent activation of glutamate in presence of ATP and the subsequent transfer of glutamate onto a tRNA(Asp). Glutamate is transferred on the 2-amino-5-(4,5-dihydroxy-2-cyclopenten-1-yl) moiety of the queuosine in the wobble position of the QUC anticodon.</text>
</comment>
<comment type="cofactor">
    <cofactor evidence="1">
        <name>Zn(2+)</name>
        <dbReference type="ChEBI" id="CHEBI:29105"/>
    </cofactor>
    <text evidence="1">Binds 1 zinc ion per subunit.</text>
</comment>
<comment type="similarity">
    <text evidence="1">Belongs to the class-I aminoacyl-tRNA synthetase family. GluQ subfamily.</text>
</comment>
<comment type="caution">
    <text evidence="2">Lacks the conserved Tyr, which is one of four residues to bind the zinc atom.</text>
</comment>
<proteinExistence type="inferred from homology"/>
<reference key="1">
    <citation type="journal article" date="2002" name="Nature">
        <title>Comparison of the genomes of two Xanthomonas pathogens with differing host specificities.</title>
        <authorList>
            <person name="da Silva A.C.R."/>
            <person name="Ferro J.A."/>
            <person name="Reinach F.C."/>
            <person name="Farah C.S."/>
            <person name="Furlan L.R."/>
            <person name="Quaggio R.B."/>
            <person name="Monteiro-Vitorello C.B."/>
            <person name="Van Sluys M.A."/>
            <person name="Almeida N.F. Jr."/>
            <person name="Alves L.M.C."/>
            <person name="do Amaral A.M."/>
            <person name="Bertolini M.C."/>
            <person name="Camargo L.E.A."/>
            <person name="Camarotte G."/>
            <person name="Cannavan F."/>
            <person name="Cardozo J."/>
            <person name="Chambergo F."/>
            <person name="Ciapina L.P."/>
            <person name="Cicarelli R.M.B."/>
            <person name="Coutinho L.L."/>
            <person name="Cursino-Santos J.R."/>
            <person name="El-Dorry H."/>
            <person name="Faria J.B."/>
            <person name="Ferreira A.J.S."/>
            <person name="Ferreira R.C.C."/>
            <person name="Ferro M.I.T."/>
            <person name="Formighieri E.F."/>
            <person name="Franco M.C."/>
            <person name="Greggio C.C."/>
            <person name="Gruber A."/>
            <person name="Katsuyama A.M."/>
            <person name="Kishi L.T."/>
            <person name="Leite R.P."/>
            <person name="Lemos E.G.M."/>
            <person name="Lemos M.V.F."/>
            <person name="Locali E.C."/>
            <person name="Machado M.A."/>
            <person name="Madeira A.M.B.N."/>
            <person name="Martinez-Rossi N.M."/>
            <person name="Martins E.C."/>
            <person name="Meidanis J."/>
            <person name="Menck C.F.M."/>
            <person name="Miyaki C.Y."/>
            <person name="Moon D.H."/>
            <person name="Moreira L.M."/>
            <person name="Novo M.T.M."/>
            <person name="Okura V.K."/>
            <person name="Oliveira M.C."/>
            <person name="Oliveira V.R."/>
            <person name="Pereira H.A."/>
            <person name="Rossi A."/>
            <person name="Sena J.A.D."/>
            <person name="Silva C."/>
            <person name="de Souza R.F."/>
            <person name="Spinola L.A.F."/>
            <person name="Takita M.A."/>
            <person name="Tamura R.E."/>
            <person name="Teixeira E.C."/>
            <person name="Tezza R.I.D."/>
            <person name="Trindade dos Santos M."/>
            <person name="Truffi D."/>
            <person name="Tsai S.M."/>
            <person name="White F.F."/>
            <person name="Setubal J.C."/>
            <person name="Kitajima J.P."/>
        </authorList>
    </citation>
    <scope>NUCLEOTIDE SEQUENCE [LARGE SCALE GENOMIC DNA]</scope>
    <source>
        <strain>ATCC 33913 / DSM 3586 / NCPPB 528 / LMG 568 / P 25</strain>
    </source>
</reference>
<feature type="chain" id="PRO_0000208336" description="Glutamyl-Q tRNA(Asp) synthetase">
    <location>
        <begin position="1"/>
        <end position="297"/>
    </location>
</feature>
<feature type="short sequence motif" description="'HIGH' region">
    <location>
        <begin position="12"/>
        <end position="22"/>
    </location>
</feature>
<feature type="short sequence motif" description="'KMSKS' region">
    <location>
        <begin position="226"/>
        <end position="230"/>
    </location>
</feature>
<feature type="binding site" evidence="1">
    <location>
        <begin position="9"/>
        <end position="13"/>
    </location>
    <ligand>
        <name>L-glutamate</name>
        <dbReference type="ChEBI" id="CHEBI:29985"/>
    </ligand>
</feature>
<feature type="binding site" evidence="1">
    <location>
        <position position="45"/>
    </location>
    <ligand>
        <name>L-glutamate</name>
        <dbReference type="ChEBI" id="CHEBI:29985"/>
    </ligand>
</feature>
<feature type="binding site" evidence="1">
    <location>
        <position position="101"/>
    </location>
    <ligand>
        <name>Zn(2+)</name>
        <dbReference type="ChEBI" id="CHEBI:29105"/>
    </ligand>
</feature>
<feature type="binding site" evidence="1">
    <location>
        <position position="103"/>
    </location>
    <ligand>
        <name>Zn(2+)</name>
        <dbReference type="ChEBI" id="CHEBI:29105"/>
    </ligand>
</feature>
<feature type="binding site" evidence="1">
    <location>
        <position position="118"/>
    </location>
    <ligand>
        <name>Zn(2+)</name>
        <dbReference type="ChEBI" id="CHEBI:29105"/>
    </ligand>
</feature>
<feature type="binding site" evidence="1">
    <location>
        <position position="170"/>
    </location>
    <ligand>
        <name>L-glutamate</name>
        <dbReference type="ChEBI" id="CHEBI:29985"/>
    </ligand>
</feature>
<feature type="binding site" evidence="1">
    <location>
        <position position="188"/>
    </location>
    <ligand>
        <name>L-glutamate</name>
        <dbReference type="ChEBI" id="CHEBI:29985"/>
    </ligand>
</feature>
<feature type="binding site" evidence="1">
    <location>
        <position position="229"/>
    </location>
    <ligand>
        <name>ATP</name>
        <dbReference type="ChEBI" id="CHEBI:30616"/>
    </ligand>
</feature>
<dbReference type="EC" id="6.1.1.-" evidence="1"/>
<dbReference type="EMBL" id="AE008922">
    <property type="protein sequence ID" value="AAM41572.1"/>
    <property type="molecule type" value="Genomic_DNA"/>
</dbReference>
<dbReference type="RefSeq" id="NP_637648.1">
    <property type="nucleotide sequence ID" value="NC_003902.1"/>
</dbReference>
<dbReference type="SMR" id="Q8P8E9"/>
<dbReference type="STRING" id="190485.XCC2293"/>
<dbReference type="EnsemblBacteria" id="AAM41572">
    <property type="protein sequence ID" value="AAM41572"/>
    <property type="gene ID" value="XCC2293"/>
</dbReference>
<dbReference type="KEGG" id="xcc:XCC2293"/>
<dbReference type="PATRIC" id="fig|190485.4.peg.2443"/>
<dbReference type="eggNOG" id="COG0008">
    <property type="taxonomic scope" value="Bacteria"/>
</dbReference>
<dbReference type="HOGENOM" id="CLU_015768_0_1_6"/>
<dbReference type="OrthoDB" id="9807503at2"/>
<dbReference type="Proteomes" id="UP000001010">
    <property type="component" value="Chromosome"/>
</dbReference>
<dbReference type="GO" id="GO:0005829">
    <property type="term" value="C:cytosol"/>
    <property type="evidence" value="ECO:0000318"/>
    <property type="project" value="GO_Central"/>
</dbReference>
<dbReference type="GO" id="GO:0005524">
    <property type="term" value="F:ATP binding"/>
    <property type="evidence" value="ECO:0007669"/>
    <property type="project" value="UniProtKB-KW"/>
</dbReference>
<dbReference type="GO" id="GO:0004818">
    <property type="term" value="F:glutamate-tRNA ligase activity"/>
    <property type="evidence" value="ECO:0000318"/>
    <property type="project" value="GO_Central"/>
</dbReference>
<dbReference type="GO" id="GO:0008270">
    <property type="term" value="F:zinc ion binding"/>
    <property type="evidence" value="ECO:0007669"/>
    <property type="project" value="InterPro"/>
</dbReference>
<dbReference type="GO" id="GO:0006424">
    <property type="term" value="P:glutamyl-tRNA aminoacylation"/>
    <property type="evidence" value="ECO:0000318"/>
    <property type="project" value="GO_Central"/>
</dbReference>
<dbReference type="GO" id="GO:0006400">
    <property type="term" value="P:tRNA modification"/>
    <property type="evidence" value="ECO:0007669"/>
    <property type="project" value="InterPro"/>
</dbReference>
<dbReference type="Gene3D" id="3.40.50.620">
    <property type="entry name" value="HUPs"/>
    <property type="match status" value="1"/>
</dbReference>
<dbReference type="HAMAP" id="MF_01428">
    <property type="entry name" value="Glu_Q_tRNA_synth"/>
    <property type="match status" value="1"/>
</dbReference>
<dbReference type="InterPro" id="IPR022380">
    <property type="entry name" value="Glu-Q_tRNA(Asp)_Synthase"/>
</dbReference>
<dbReference type="InterPro" id="IPR000924">
    <property type="entry name" value="Glu/Gln-tRNA-synth"/>
</dbReference>
<dbReference type="InterPro" id="IPR020058">
    <property type="entry name" value="Glu/Gln-tRNA-synth_Ib_cat-dom"/>
</dbReference>
<dbReference type="InterPro" id="IPR049940">
    <property type="entry name" value="GluQ/Sye"/>
</dbReference>
<dbReference type="InterPro" id="IPR014729">
    <property type="entry name" value="Rossmann-like_a/b/a_fold"/>
</dbReference>
<dbReference type="NCBIfam" id="NF004314">
    <property type="entry name" value="PRK05710.1-3"/>
    <property type="match status" value="1"/>
</dbReference>
<dbReference type="NCBIfam" id="TIGR03838">
    <property type="entry name" value="queuosine_YadB"/>
    <property type="match status" value="1"/>
</dbReference>
<dbReference type="PANTHER" id="PTHR43311">
    <property type="entry name" value="GLUTAMATE--TRNA LIGASE"/>
    <property type="match status" value="1"/>
</dbReference>
<dbReference type="PANTHER" id="PTHR43311:SF1">
    <property type="entry name" value="GLUTAMYL-Q TRNA(ASP) SYNTHETASE"/>
    <property type="match status" value="1"/>
</dbReference>
<dbReference type="Pfam" id="PF00749">
    <property type="entry name" value="tRNA-synt_1c"/>
    <property type="match status" value="2"/>
</dbReference>
<dbReference type="PRINTS" id="PR00987">
    <property type="entry name" value="TRNASYNTHGLU"/>
</dbReference>
<dbReference type="SUPFAM" id="SSF52374">
    <property type="entry name" value="Nucleotidylyl transferase"/>
    <property type="match status" value="1"/>
</dbReference>